<dbReference type="EC" id="6.1.1.14" evidence="1"/>
<dbReference type="EMBL" id="CP001034">
    <property type="protein sequence ID" value="ACB84791.1"/>
    <property type="molecule type" value="Genomic_DNA"/>
</dbReference>
<dbReference type="RefSeq" id="WP_012447666.1">
    <property type="nucleotide sequence ID" value="NC_010718.1"/>
</dbReference>
<dbReference type="SMR" id="B2A1Y6"/>
<dbReference type="FunCoup" id="B2A1Y6">
    <property type="interactions" value="360"/>
</dbReference>
<dbReference type="STRING" id="457570.Nther_1208"/>
<dbReference type="KEGG" id="nth:Nther_1208"/>
<dbReference type="eggNOG" id="COG0751">
    <property type="taxonomic scope" value="Bacteria"/>
</dbReference>
<dbReference type="HOGENOM" id="CLU_007220_2_2_9"/>
<dbReference type="InParanoid" id="B2A1Y6"/>
<dbReference type="OrthoDB" id="9775440at2"/>
<dbReference type="Proteomes" id="UP000001683">
    <property type="component" value="Chromosome"/>
</dbReference>
<dbReference type="GO" id="GO:0005829">
    <property type="term" value="C:cytosol"/>
    <property type="evidence" value="ECO:0007669"/>
    <property type="project" value="TreeGrafter"/>
</dbReference>
<dbReference type="GO" id="GO:0004814">
    <property type="term" value="F:arginine-tRNA ligase activity"/>
    <property type="evidence" value="ECO:0007669"/>
    <property type="project" value="InterPro"/>
</dbReference>
<dbReference type="GO" id="GO:0005524">
    <property type="term" value="F:ATP binding"/>
    <property type="evidence" value="ECO:0007669"/>
    <property type="project" value="UniProtKB-UniRule"/>
</dbReference>
<dbReference type="GO" id="GO:0004820">
    <property type="term" value="F:glycine-tRNA ligase activity"/>
    <property type="evidence" value="ECO:0007669"/>
    <property type="project" value="UniProtKB-UniRule"/>
</dbReference>
<dbReference type="GO" id="GO:0006420">
    <property type="term" value="P:arginyl-tRNA aminoacylation"/>
    <property type="evidence" value="ECO:0007669"/>
    <property type="project" value="InterPro"/>
</dbReference>
<dbReference type="GO" id="GO:0006426">
    <property type="term" value="P:glycyl-tRNA aminoacylation"/>
    <property type="evidence" value="ECO:0007669"/>
    <property type="project" value="UniProtKB-UniRule"/>
</dbReference>
<dbReference type="HAMAP" id="MF_00255">
    <property type="entry name" value="Gly_tRNA_synth_beta"/>
    <property type="match status" value="1"/>
</dbReference>
<dbReference type="InterPro" id="IPR008909">
    <property type="entry name" value="DALR_anticod-bd"/>
</dbReference>
<dbReference type="InterPro" id="IPR015944">
    <property type="entry name" value="Gly-tRNA-synth_bsu"/>
</dbReference>
<dbReference type="InterPro" id="IPR006194">
    <property type="entry name" value="Gly-tRNA-synth_heterodimer"/>
</dbReference>
<dbReference type="NCBIfam" id="TIGR00211">
    <property type="entry name" value="glyS"/>
    <property type="match status" value="1"/>
</dbReference>
<dbReference type="PANTHER" id="PTHR30075:SF2">
    <property type="entry name" value="GLYCINE--TRNA LIGASE, CHLOROPLASTIC_MITOCHONDRIAL 2"/>
    <property type="match status" value="1"/>
</dbReference>
<dbReference type="PANTHER" id="PTHR30075">
    <property type="entry name" value="GLYCYL-TRNA SYNTHETASE"/>
    <property type="match status" value="1"/>
</dbReference>
<dbReference type="Pfam" id="PF05746">
    <property type="entry name" value="DALR_1"/>
    <property type="match status" value="1"/>
</dbReference>
<dbReference type="Pfam" id="PF02092">
    <property type="entry name" value="tRNA_synt_2f"/>
    <property type="match status" value="1"/>
</dbReference>
<dbReference type="PRINTS" id="PR01045">
    <property type="entry name" value="TRNASYNTHGB"/>
</dbReference>
<dbReference type="SUPFAM" id="SSF109604">
    <property type="entry name" value="HD-domain/PDEase-like"/>
    <property type="match status" value="1"/>
</dbReference>
<dbReference type="PROSITE" id="PS50861">
    <property type="entry name" value="AA_TRNA_LIGASE_II_GLYAB"/>
    <property type="match status" value="1"/>
</dbReference>
<comment type="catalytic activity">
    <reaction evidence="1">
        <text>tRNA(Gly) + glycine + ATP = glycyl-tRNA(Gly) + AMP + diphosphate</text>
        <dbReference type="Rhea" id="RHEA:16013"/>
        <dbReference type="Rhea" id="RHEA-COMP:9664"/>
        <dbReference type="Rhea" id="RHEA-COMP:9683"/>
        <dbReference type="ChEBI" id="CHEBI:30616"/>
        <dbReference type="ChEBI" id="CHEBI:33019"/>
        <dbReference type="ChEBI" id="CHEBI:57305"/>
        <dbReference type="ChEBI" id="CHEBI:78442"/>
        <dbReference type="ChEBI" id="CHEBI:78522"/>
        <dbReference type="ChEBI" id="CHEBI:456215"/>
        <dbReference type="EC" id="6.1.1.14"/>
    </reaction>
</comment>
<comment type="subunit">
    <text evidence="1">Tetramer of two alpha and two beta subunits.</text>
</comment>
<comment type="subcellular location">
    <subcellularLocation>
        <location evidence="1">Cytoplasm</location>
    </subcellularLocation>
</comment>
<comment type="similarity">
    <text evidence="1">Belongs to the class-II aminoacyl-tRNA synthetase family.</text>
</comment>
<protein>
    <recommendedName>
        <fullName evidence="1">Glycine--tRNA ligase beta subunit</fullName>
        <ecNumber evidence="1">6.1.1.14</ecNumber>
    </recommendedName>
    <alternativeName>
        <fullName evidence="1">Glycyl-tRNA synthetase beta subunit</fullName>
        <shortName evidence="1">GlyRS</shortName>
    </alternativeName>
</protein>
<accession>B2A1Y6</accession>
<reference key="1">
    <citation type="submission" date="2008-04" db="EMBL/GenBank/DDBJ databases">
        <title>Complete sequence of chromosome of Natranaerobius thermophilus JW/NM-WN-LF.</title>
        <authorList>
            <consortium name="US DOE Joint Genome Institute"/>
            <person name="Copeland A."/>
            <person name="Lucas S."/>
            <person name="Lapidus A."/>
            <person name="Glavina del Rio T."/>
            <person name="Dalin E."/>
            <person name="Tice H."/>
            <person name="Bruce D."/>
            <person name="Goodwin L."/>
            <person name="Pitluck S."/>
            <person name="Chertkov O."/>
            <person name="Brettin T."/>
            <person name="Detter J.C."/>
            <person name="Han C."/>
            <person name="Kuske C.R."/>
            <person name="Schmutz J."/>
            <person name="Larimer F."/>
            <person name="Land M."/>
            <person name="Hauser L."/>
            <person name="Kyrpides N."/>
            <person name="Lykidis A."/>
            <person name="Mesbah N.M."/>
            <person name="Wiegel J."/>
        </authorList>
    </citation>
    <scope>NUCLEOTIDE SEQUENCE [LARGE SCALE GENOMIC DNA]</scope>
    <source>
        <strain>ATCC BAA-1301 / DSM 18059 / JW/NM-WN-LF</strain>
    </source>
</reference>
<gene>
    <name evidence="1" type="primary">glyS</name>
    <name type="ordered locus">Nther_1208</name>
</gene>
<keyword id="KW-0030">Aminoacyl-tRNA synthetase</keyword>
<keyword id="KW-0067">ATP-binding</keyword>
<keyword id="KW-0963">Cytoplasm</keyword>
<keyword id="KW-0436">Ligase</keyword>
<keyword id="KW-0547">Nucleotide-binding</keyword>
<keyword id="KW-0648">Protein biosynthesis</keyword>
<keyword id="KW-1185">Reference proteome</keyword>
<proteinExistence type="inferred from homology"/>
<name>SYGB_NATTJ</name>
<evidence type="ECO:0000255" key="1">
    <source>
        <dbReference type="HAMAP-Rule" id="MF_00255"/>
    </source>
</evidence>
<organism>
    <name type="scientific">Natranaerobius thermophilus (strain ATCC BAA-1301 / DSM 18059 / JW/NM-WN-LF)</name>
    <dbReference type="NCBI Taxonomy" id="457570"/>
    <lineage>
        <taxon>Bacteria</taxon>
        <taxon>Bacillati</taxon>
        <taxon>Bacillota</taxon>
        <taxon>Clostridia</taxon>
        <taxon>Natranaerobiales</taxon>
        <taxon>Natranaerobiaceae</taxon>
        <taxon>Natranaerobius</taxon>
    </lineage>
</organism>
<sequence length="693" mass="79270">MHNTLLFELGTEELPARFIPGLIKQLEENSANLLTEYRIEYENIKVMATPRRLTLLVNGLADKQQSSTTMKRGPAKEIAFDENGEPTKAAIGFARGQNIDPKDLEIREDNGKEYVYAVAEIVGENCQDVLPKLLDELITKFNLPVKMFWNNKQDKFLRPVRWLVCLFNDQVLPLNFGTVEASNISRGHRFLSQGDVIINSAENYEEVMRDSWVMVDHNVREETIKAQIEELADQMNASPEMPHDLLEEVNFLVEWPTALLGNFAEEFLEIPKEALITSMQEHQKYFALVDKEDSSKLLPYFVAVRNGDDHGIDKVKAGNERVLRARLSDARFFFEEDTKTSLESKREQLKSIIYKEQLGSVDQKVTRMEELGKTLLDILELSEPVRSLTLRAIALSKADLPTNMVSEFPHLQGIMGEKYARIHGEDEKVCLGISEHYLPRHTGDKLPQTMVGTITSIVDKVDNIASSFAIGERPSGSQDPYALRRQALGIVHIILETELAFSLEQLFHRALSLIPESALVAPISNILDDILDFVKLRSRTIFNEQGLPIDIIDSTLEVDKANVYKAYLRAKVLKDYRDSQELEDVRTAYTRVKNLANKAKGEDVYTELLQDETEKMLYHKYLNTEDKLLSDLEQDEISSAISELAGFKDYIDQFFDEVMVMVDDKHLQNNRLNLIYHIKEMYRQLADFSIIQD</sequence>
<feature type="chain" id="PRO_1000101305" description="Glycine--tRNA ligase beta subunit">
    <location>
        <begin position="1"/>
        <end position="693"/>
    </location>
</feature>